<feature type="chain" id="PRO_0000357939" description="NADH-quinone oxidoreductase subunit D 1">
    <location>
        <begin position="1"/>
        <end position="383"/>
    </location>
</feature>
<keyword id="KW-1003">Cell membrane</keyword>
<keyword id="KW-0472">Membrane</keyword>
<keyword id="KW-0520">NAD</keyword>
<keyword id="KW-0874">Quinone</keyword>
<keyword id="KW-1185">Reference proteome</keyword>
<keyword id="KW-1278">Translocase</keyword>
<keyword id="KW-0813">Transport</keyword>
<protein>
    <recommendedName>
        <fullName evidence="1">NADH-quinone oxidoreductase subunit D 1</fullName>
        <ecNumber evidence="1">7.1.1.-</ecNumber>
    </recommendedName>
    <alternativeName>
        <fullName evidence="1">NADH dehydrogenase I subunit D 1</fullName>
    </alternativeName>
    <alternativeName>
        <fullName evidence="1">NDH-1 subunit D 1</fullName>
    </alternativeName>
</protein>
<organism>
    <name type="scientific">Streptomyces coelicolor (strain ATCC BAA-471 / A3(2) / M145)</name>
    <dbReference type="NCBI Taxonomy" id="100226"/>
    <lineage>
        <taxon>Bacteria</taxon>
        <taxon>Bacillati</taxon>
        <taxon>Actinomycetota</taxon>
        <taxon>Actinomycetes</taxon>
        <taxon>Kitasatosporales</taxon>
        <taxon>Streptomycetaceae</taxon>
        <taxon>Streptomyces</taxon>
        <taxon>Streptomyces albidoflavus group</taxon>
    </lineage>
</organism>
<gene>
    <name evidence="1" type="primary">nuoD1</name>
    <name type="ordered locus">SCO3392</name>
    <name type="ORF">SCE126.10</name>
</gene>
<evidence type="ECO:0000255" key="1">
    <source>
        <dbReference type="HAMAP-Rule" id="MF_01358"/>
    </source>
</evidence>
<sequence>MTPTTETTVGIGGAAESTDMVLNIGPQHPSTHGVLRLKLVLDGERITSAEPVIGYMHRGAEKLFEARDYRQIIMLANRHDWLSAFSNELGVVLAVERMLGMEVPTRAVWTRTLLAELNRVLNHLMFLGSYPLELGGITPVFYAFREREVLQNVMEEVSGGRMHYMFNRVGGLKEDLPAGWTTRARGAVAAVRSRMDVFDDLVLGNEIFRGRTRGVGALSAEAVHAYGVSGPVARASGVDFDLRRDEPYLAYGELQDTLKVVTRTDGDCLARFECLLAQTHNALDLADACLDRLAELAPGPVNQRLPKVLKAPEGHTYAWTENPLGINGYYLVSKGEKTPYRLKLRSASYNNIQALAELLPGTLVADMVAILGSLFFVVGDIDK</sequence>
<reference key="1">
    <citation type="journal article" date="2002" name="Nature">
        <title>Complete genome sequence of the model actinomycete Streptomyces coelicolor A3(2).</title>
        <authorList>
            <person name="Bentley S.D."/>
            <person name="Chater K.F."/>
            <person name="Cerdeno-Tarraga A.-M."/>
            <person name="Challis G.L."/>
            <person name="Thomson N.R."/>
            <person name="James K.D."/>
            <person name="Harris D.E."/>
            <person name="Quail M.A."/>
            <person name="Kieser H."/>
            <person name="Harper D."/>
            <person name="Bateman A."/>
            <person name="Brown S."/>
            <person name="Chandra G."/>
            <person name="Chen C.W."/>
            <person name="Collins M."/>
            <person name="Cronin A."/>
            <person name="Fraser A."/>
            <person name="Goble A."/>
            <person name="Hidalgo J."/>
            <person name="Hornsby T."/>
            <person name="Howarth S."/>
            <person name="Huang C.-H."/>
            <person name="Kieser T."/>
            <person name="Larke L."/>
            <person name="Murphy L.D."/>
            <person name="Oliver K."/>
            <person name="O'Neil S."/>
            <person name="Rabbinowitsch E."/>
            <person name="Rajandream M.A."/>
            <person name="Rutherford K.M."/>
            <person name="Rutter S."/>
            <person name="Seeger K."/>
            <person name="Saunders D."/>
            <person name="Sharp S."/>
            <person name="Squares R."/>
            <person name="Squares S."/>
            <person name="Taylor K."/>
            <person name="Warren T."/>
            <person name="Wietzorrek A."/>
            <person name="Woodward J.R."/>
            <person name="Barrell B.G."/>
            <person name="Parkhill J."/>
            <person name="Hopwood D.A."/>
        </authorList>
    </citation>
    <scope>NUCLEOTIDE SEQUENCE [LARGE SCALE GENOMIC DNA]</scope>
    <source>
        <strain>ATCC BAA-471 / A3(2) / M145</strain>
    </source>
</reference>
<comment type="function">
    <text evidence="1">NDH-1 shuttles electrons from NADH, via FMN and iron-sulfur (Fe-S) centers, to quinones in the respiratory chain. The immediate electron acceptor for the enzyme in this species is believed to be a menaquinone. Couples the redox reaction to proton translocation (for every two electrons transferred, four hydrogen ions are translocated across the cytoplasmic membrane), and thus conserves the redox energy in a proton gradient.</text>
</comment>
<comment type="catalytic activity">
    <reaction evidence="1">
        <text>a quinone + NADH + 5 H(+)(in) = a quinol + NAD(+) + 4 H(+)(out)</text>
        <dbReference type="Rhea" id="RHEA:57888"/>
        <dbReference type="ChEBI" id="CHEBI:15378"/>
        <dbReference type="ChEBI" id="CHEBI:24646"/>
        <dbReference type="ChEBI" id="CHEBI:57540"/>
        <dbReference type="ChEBI" id="CHEBI:57945"/>
        <dbReference type="ChEBI" id="CHEBI:132124"/>
    </reaction>
</comment>
<comment type="subunit">
    <text evidence="1">NDH-1 is composed of 14 different subunits. Subunits NuoB, C, D, E, F, and G constitute the peripheral sector of the complex.</text>
</comment>
<comment type="subcellular location">
    <subcellularLocation>
        <location evidence="1">Cell membrane</location>
        <topology evidence="1">Peripheral membrane protein</topology>
        <orientation evidence="1">Cytoplasmic side</orientation>
    </subcellularLocation>
</comment>
<comment type="similarity">
    <text evidence="1">Belongs to the complex I 49 kDa subunit family.</text>
</comment>
<name>NUOD1_STRCO</name>
<dbReference type="EC" id="7.1.1.-" evidence="1"/>
<dbReference type="EMBL" id="AL939116">
    <property type="protein sequence ID" value="CAB40932.1"/>
    <property type="molecule type" value="Genomic_DNA"/>
</dbReference>
<dbReference type="PIR" id="T36080">
    <property type="entry name" value="T36080"/>
</dbReference>
<dbReference type="RefSeq" id="NP_627599.1">
    <property type="nucleotide sequence ID" value="NC_003888.3"/>
</dbReference>
<dbReference type="RefSeq" id="WP_003975441.1">
    <property type="nucleotide sequence ID" value="NZ_VNID01000023.1"/>
</dbReference>
<dbReference type="SMR" id="Q9X853"/>
<dbReference type="STRING" id="100226.gene:17761014"/>
<dbReference type="PaxDb" id="100226-SCO3392"/>
<dbReference type="KEGG" id="sco:SCO3392"/>
<dbReference type="PATRIC" id="fig|100226.15.peg.3455"/>
<dbReference type="eggNOG" id="COG0649">
    <property type="taxonomic scope" value="Bacteria"/>
</dbReference>
<dbReference type="HOGENOM" id="CLU_015134_1_2_11"/>
<dbReference type="InParanoid" id="Q9X853"/>
<dbReference type="OrthoDB" id="9801496at2"/>
<dbReference type="PhylomeDB" id="Q9X853"/>
<dbReference type="Proteomes" id="UP000001973">
    <property type="component" value="Chromosome"/>
</dbReference>
<dbReference type="GO" id="GO:0005886">
    <property type="term" value="C:plasma membrane"/>
    <property type="evidence" value="ECO:0007669"/>
    <property type="project" value="UniProtKB-SubCell"/>
</dbReference>
<dbReference type="GO" id="GO:0051287">
    <property type="term" value="F:NAD binding"/>
    <property type="evidence" value="ECO:0007669"/>
    <property type="project" value="InterPro"/>
</dbReference>
<dbReference type="GO" id="GO:0050136">
    <property type="term" value="F:NADH:ubiquinone reductase (non-electrogenic) activity"/>
    <property type="evidence" value="ECO:0007669"/>
    <property type="project" value="UniProtKB-UniRule"/>
</dbReference>
<dbReference type="GO" id="GO:0048038">
    <property type="term" value="F:quinone binding"/>
    <property type="evidence" value="ECO:0007669"/>
    <property type="project" value="UniProtKB-KW"/>
</dbReference>
<dbReference type="Gene3D" id="1.10.645.10">
    <property type="entry name" value="Cytochrome-c3 Hydrogenase, chain B"/>
    <property type="match status" value="1"/>
</dbReference>
<dbReference type="HAMAP" id="MF_01358">
    <property type="entry name" value="NDH1_NuoD"/>
    <property type="match status" value="1"/>
</dbReference>
<dbReference type="InterPro" id="IPR001135">
    <property type="entry name" value="NADH_Q_OxRdtase_suD"/>
</dbReference>
<dbReference type="InterPro" id="IPR014029">
    <property type="entry name" value="NADH_UbQ_OxRdtase_49kDa_CS"/>
</dbReference>
<dbReference type="InterPro" id="IPR022885">
    <property type="entry name" value="NDH1_su_D/H"/>
</dbReference>
<dbReference type="InterPro" id="IPR029014">
    <property type="entry name" value="NiFe-Hase_large"/>
</dbReference>
<dbReference type="PANTHER" id="PTHR11993:SF10">
    <property type="entry name" value="NADH DEHYDROGENASE [UBIQUINONE] IRON-SULFUR PROTEIN 2, MITOCHONDRIAL"/>
    <property type="match status" value="1"/>
</dbReference>
<dbReference type="PANTHER" id="PTHR11993">
    <property type="entry name" value="NADH-UBIQUINONE OXIDOREDUCTASE 49 KDA SUBUNIT"/>
    <property type="match status" value="1"/>
</dbReference>
<dbReference type="Pfam" id="PF00346">
    <property type="entry name" value="Complex1_49kDa"/>
    <property type="match status" value="2"/>
</dbReference>
<dbReference type="SUPFAM" id="SSF56762">
    <property type="entry name" value="HydB/Nqo4-like"/>
    <property type="match status" value="1"/>
</dbReference>
<dbReference type="PROSITE" id="PS00535">
    <property type="entry name" value="COMPLEX1_49K"/>
    <property type="match status" value="1"/>
</dbReference>
<proteinExistence type="inferred from homology"/>
<accession>Q9X853</accession>